<dbReference type="EC" id="4.6.1.-" evidence="4"/>
<dbReference type="EMBL" id="FJ171506">
    <property type="protein sequence ID" value="ACN49002.1"/>
    <property type="molecule type" value="mRNA"/>
</dbReference>
<dbReference type="SMR" id="C0JB71"/>
<dbReference type="GO" id="GO:0005576">
    <property type="term" value="C:extracellular region"/>
    <property type="evidence" value="ECO:0007669"/>
    <property type="project" value="UniProtKB-SubCell"/>
</dbReference>
<dbReference type="GO" id="GO:0016829">
    <property type="term" value="F:lyase activity"/>
    <property type="evidence" value="ECO:0007669"/>
    <property type="project" value="UniProtKB-KW"/>
</dbReference>
<dbReference type="GO" id="GO:0046872">
    <property type="term" value="F:metal ion binding"/>
    <property type="evidence" value="ECO:0007669"/>
    <property type="project" value="UniProtKB-KW"/>
</dbReference>
<dbReference type="GO" id="GO:0008081">
    <property type="term" value="F:phosphoric diester hydrolase activity"/>
    <property type="evidence" value="ECO:0007669"/>
    <property type="project" value="InterPro"/>
</dbReference>
<dbReference type="GO" id="GO:0090729">
    <property type="term" value="F:toxin activity"/>
    <property type="evidence" value="ECO:0007669"/>
    <property type="project" value="UniProtKB-KW"/>
</dbReference>
<dbReference type="GO" id="GO:0031640">
    <property type="term" value="P:killing of cells of another organism"/>
    <property type="evidence" value="ECO:0007669"/>
    <property type="project" value="UniProtKB-KW"/>
</dbReference>
<dbReference type="GO" id="GO:0016042">
    <property type="term" value="P:lipid catabolic process"/>
    <property type="evidence" value="ECO:0007669"/>
    <property type="project" value="UniProtKB-KW"/>
</dbReference>
<dbReference type="CDD" id="cd08576">
    <property type="entry name" value="GDPD_like_SMaseD_PLD"/>
    <property type="match status" value="1"/>
</dbReference>
<dbReference type="Gene3D" id="3.20.20.190">
    <property type="entry name" value="Phosphatidylinositol (PI) phosphodiesterase"/>
    <property type="match status" value="1"/>
</dbReference>
<dbReference type="InterPro" id="IPR017946">
    <property type="entry name" value="PLC-like_Pdiesterase_TIM-brl"/>
</dbReference>
<dbReference type="SUPFAM" id="SSF51695">
    <property type="entry name" value="PLC-like phosphodiesterases"/>
    <property type="match status" value="1"/>
</dbReference>
<dbReference type="PROSITE" id="PS50007">
    <property type="entry name" value="PIPLC_X_DOMAIN"/>
    <property type="match status" value="1"/>
</dbReference>
<protein>
    <recommendedName>
        <fullName evidence="7">Dermonecrotic toxin SdSicTox-betaIIB1bi</fullName>
        <ecNumber evidence="4">4.6.1.-</ecNumber>
    </recommendedName>
    <alternativeName>
        <fullName>Phospholipase D</fullName>
        <shortName>PLD</shortName>
    </alternativeName>
    <alternativeName>
        <fullName>Sphingomyelin phosphodiesterase D</fullName>
        <shortName>SMD</shortName>
        <shortName>SMase D</shortName>
        <shortName>Sphingomyelinase D</shortName>
    </alternativeName>
</protein>
<reference key="1">
    <citation type="journal article" date="2009" name="Mol. Biol. Evol.">
        <title>Molecular evolution, functional variation, and proposed nomenclature of the gene family that includes sphingomyelinase D in sicariid spider venoms.</title>
        <authorList>
            <person name="Binford G.J."/>
            <person name="Bodner M.R."/>
            <person name="Cordes M.H."/>
            <person name="Baldwin K.L."/>
            <person name="Rynerson M.R."/>
            <person name="Burns S.N."/>
            <person name="Zobel-Thropp P.A."/>
        </authorList>
    </citation>
    <scope>NUCLEOTIDE SEQUENCE [MRNA]</scope>
    <scope>NOMENCLATURE</scope>
    <source>
        <tissue>Venom gland</tissue>
    </source>
</reference>
<sequence length="274" mass="31650">WIMGHMVNAIEQVDEFLNLGANAIELDIDFDKDGIAQITHHGIPCDCGRECTKKAIFTEYLDNIRQVTTPDNPKFREQLVLLALDLKLQRISSAKAYRAGEDVAKKLLDHYWQRGNSRARAYILLNIPLVEDCEFIRAFKDTLKNEGYESYNDKVGINFTGNEDLDKIRDVLEILGIHKQVWQADGITSCFARGTERLKEALEKRDTPGYNYINKVYAWTLVRKSIMRRSLRLGVDGVMSNNPDRVIKVLKEKEFADKFRLATYNDNPWEKFRG</sequence>
<feature type="chain" id="PRO_0000392886" description="Dermonecrotic toxin SdSicTox-betaIIB1bi">
    <location>
        <begin position="1" status="less than"/>
        <end position="274"/>
    </location>
</feature>
<feature type="active site" evidence="6">
    <location>
        <position position="5"/>
    </location>
</feature>
<feature type="active site" description="Nucleophile" evidence="6">
    <location>
        <position position="41"/>
    </location>
</feature>
<feature type="binding site" evidence="5">
    <location>
        <position position="25"/>
    </location>
    <ligand>
        <name>Mg(2+)</name>
        <dbReference type="ChEBI" id="CHEBI:18420"/>
    </ligand>
</feature>
<feature type="binding site" evidence="5">
    <location>
        <position position="27"/>
    </location>
    <ligand>
        <name>Mg(2+)</name>
        <dbReference type="ChEBI" id="CHEBI:18420"/>
    </ligand>
</feature>
<feature type="binding site" evidence="5">
    <location>
        <position position="85"/>
    </location>
    <ligand>
        <name>Mg(2+)</name>
        <dbReference type="ChEBI" id="CHEBI:18420"/>
    </ligand>
</feature>
<feature type="disulfide bond" evidence="3">
    <location>
        <begin position="45"/>
        <end position="51"/>
    </location>
</feature>
<feature type="disulfide bond" evidence="3">
    <location>
        <begin position="47"/>
        <end position="190"/>
    </location>
</feature>
<feature type="non-terminal residue">
    <location>
        <position position="1"/>
    </location>
</feature>
<comment type="function">
    <text evidence="1 3">Dermonecrotic toxins cleave the phosphodiester linkage between the phosphate and headgroup of certain phospholipids (sphingolipid and lysolipid substrates), forming an alcohol (often choline) and a cyclic phosphate (By similarity). This toxin acts on sphingomyelin (SM) (By similarity). It may also act on ceramide phosphoethanolamine (CPE), lysophosphatidylcholine (LPC) and lysophosphatidylethanolamine (LPE), but not on lysophosphatidylserine (LPS), and lysophosphatidylglycerol (LPG) (By similarity). It acts by transphosphatidylation, releasing exclusively cyclic phosphate products as second products (By similarity). Induces dermonecrosis, hemolysis, increased vascular permeability, edema, inflammatory response, and platelet aggregation (By similarity).</text>
</comment>
<comment type="catalytic activity">
    <reaction evidence="1">
        <text>an N-(acyl)-sphingosylphosphocholine = an N-(acyl)-sphingosyl-1,3-cyclic phosphate + choline</text>
        <dbReference type="Rhea" id="RHEA:60652"/>
        <dbReference type="ChEBI" id="CHEBI:15354"/>
        <dbReference type="ChEBI" id="CHEBI:64583"/>
        <dbReference type="ChEBI" id="CHEBI:143892"/>
    </reaction>
</comment>
<comment type="catalytic activity">
    <reaction evidence="1">
        <text>an N-(acyl)-sphingosylphosphoethanolamine = an N-(acyl)-sphingosyl-1,3-cyclic phosphate + ethanolamine</text>
        <dbReference type="Rhea" id="RHEA:60648"/>
        <dbReference type="ChEBI" id="CHEBI:57603"/>
        <dbReference type="ChEBI" id="CHEBI:143891"/>
        <dbReference type="ChEBI" id="CHEBI:143892"/>
    </reaction>
</comment>
<comment type="catalytic activity">
    <reaction evidence="1">
        <text>a 1-acyl-sn-glycero-3-phosphocholine = a 1-acyl-sn-glycero-2,3-cyclic phosphate + choline</text>
        <dbReference type="Rhea" id="RHEA:60700"/>
        <dbReference type="ChEBI" id="CHEBI:15354"/>
        <dbReference type="ChEBI" id="CHEBI:58168"/>
        <dbReference type="ChEBI" id="CHEBI:143947"/>
    </reaction>
</comment>
<comment type="catalytic activity">
    <reaction evidence="1">
        <text>a 1-acyl-sn-glycero-3-phosphoethanolamine = a 1-acyl-sn-glycero-2,3-cyclic phosphate + ethanolamine</text>
        <dbReference type="Rhea" id="RHEA:60704"/>
        <dbReference type="ChEBI" id="CHEBI:57603"/>
        <dbReference type="ChEBI" id="CHEBI:64381"/>
        <dbReference type="ChEBI" id="CHEBI:143947"/>
    </reaction>
</comment>
<comment type="cofactor">
    <cofactor evidence="5">
        <name>Mg(2+)</name>
        <dbReference type="ChEBI" id="CHEBI:18420"/>
    </cofactor>
    <text evidence="5">Binds 1 Mg(2+) ion per subunit.</text>
</comment>
<comment type="subcellular location">
    <subcellularLocation>
        <location evidence="9">Secreted</location>
    </subcellularLocation>
</comment>
<comment type="tissue specificity">
    <text evidence="9">Expressed by the venom gland.</text>
</comment>
<comment type="similarity">
    <text evidence="8">Belongs to the arthropod phospholipase D family. Class II subfamily.</text>
</comment>
<comment type="caution">
    <text evidence="1 2 4">The most common activity assay for dermonecrotic toxins detects enzymatic activity by monitoring choline release from substrate. Liberation of choline from sphingomyelin (SM) or lysophosphatidylcholine (LPC) is commonly assumed to result from substrate hydrolysis, giving either ceramide-1-phosphate (C1P) or lysophosphatidic acid (LPA), respectively, as a second product. However, two studies from Lajoie and colleagues (2013 and 2015) report the observation of exclusive formation of cyclic phosphate products as second products, resulting from intramolecular transphosphatidylation. Cyclic phosphates have vastly different biological properties from their monoester counterparts, and they may be relevant to the pathology of brown spider envenomation.</text>
</comment>
<accession>C0JB71</accession>
<keyword id="KW-0204">Cytolysis</keyword>
<keyword id="KW-1061">Dermonecrotic toxin</keyword>
<keyword id="KW-1015">Disulfide bond</keyword>
<keyword id="KW-0354">Hemolysis</keyword>
<keyword id="KW-0442">Lipid degradation</keyword>
<keyword id="KW-0443">Lipid metabolism</keyword>
<keyword id="KW-0456">Lyase</keyword>
<keyword id="KW-0460">Magnesium</keyword>
<keyword id="KW-0479">Metal-binding</keyword>
<keyword id="KW-0964">Secreted</keyword>
<keyword id="KW-0800">Toxin</keyword>
<organism>
    <name type="scientific">Sicarius cf. damarensis (strain GJB-2008)</name>
    <name type="common">Six-eyed sand spider</name>
    <dbReference type="NCBI Taxonomy" id="575956"/>
    <lineage>
        <taxon>Eukaryota</taxon>
        <taxon>Metazoa</taxon>
        <taxon>Ecdysozoa</taxon>
        <taxon>Arthropoda</taxon>
        <taxon>Chelicerata</taxon>
        <taxon>Arachnida</taxon>
        <taxon>Araneae</taxon>
        <taxon>Araneomorphae</taxon>
        <taxon>Haplogynae</taxon>
        <taxon>Scytodoidea</taxon>
        <taxon>Sicariidae</taxon>
        <taxon>Sicarius</taxon>
    </lineage>
</organism>
<proteinExistence type="evidence at transcript level"/>
<evidence type="ECO:0000250" key="1">
    <source>
        <dbReference type="UniProtKB" id="A0A0D4WTV1"/>
    </source>
</evidence>
<evidence type="ECO:0000250" key="2">
    <source>
        <dbReference type="UniProtKB" id="A0A0D4WV12"/>
    </source>
</evidence>
<evidence type="ECO:0000250" key="3">
    <source>
        <dbReference type="UniProtKB" id="P0CE80"/>
    </source>
</evidence>
<evidence type="ECO:0000250" key="4">
    <source>
        <dbReference type="UniProtKB" id="Q4ZFU2"/>
    </source>
</evidence>
<evidence type="ECO:0000250" key="5">
    <source>
        <dbReference type="UniProtKB" id="Q8I914"/>
    </source>
</evidence>
<evidence type="ECO:0000255" key="6">
    <source>
        <dbReference type="PROSITE-ProRule" id="PRU00270"/>
    </source>
</evidence>
<evidence type="ECO:0000303" key="7">
    <source>
    </source>
</evidence>
<evidence type="ECO:0000305" key="8"/>
<evidence type="ECO:0000305" key="9">
    <source>
    </source>
</evidence>
<name>B2KB1_SICCD</name>